<proteinExistence type="inferred from homology"/>
<name>RK34_CYAPA</name>
<reference key="1">
    <citation type="journal article" date="1995" name="Plant Mol. Biol. Rep.">
        <title>Nucleotide sequence of the cyanelle DNA from Cyanophora paradoxa.</title>
        <authorList>
            <person name="Stirewalt V.L."/>
            <person name="Michalowski C.B."/>
            <person name="Loeffelhardt W."/>
            <person name="Bohnert H.J."/>
            <person name="Bryant D.A."/>
        </authorList>
    </citation>
    <scope>NUCLEOTIDE SEQUENCE [LARGE SCALE GENOMIC DNA]</scope>
    <source>
        <strain>UTEX LB 555 / Pringsheim</strain>
    </source>
</reference>
<reference key="2">
    <citation type="book" date="1997" name="Eukaryotism and symbiosis">
        <title>The complete sequence of the cyanelle genome of Cyanophora paradoxa: the genetic complexity of a primitive plastid.</title>
        <editorList>
            <person name="Schenk H.E.A."/>
            <person name="Herrmann R."/>
            <person name="Jeon K.W."/>
            <person name="Mueller N.E."/>
            <person name="Schwemmler W."/>
        </editorList>
        <authorList>
            <person name="Loeffelhardt W."/>
            <person name="Stirewalt V.L."/>
            <person name="Michalowski C.B."/>
            <person name="Annarella M."/>
            <person name="Farley J.Y."/>
            <person name="Schluchter W.M."/>
            <person name="Chung S."/>
            <person name="Newmann-Spallart C."/>
            <person name="Steiner J.M."/>
            <person name="Jakowitsch J."/>
            <person name="Bohnert H.J."/>
            <person name="Bryant D.A."/>
        </authorList>
    </citation>
    <scope>NUCLEOTIDE SEQUENCE [LARGE SCALE GENOMIC DNA]</scope>
    <source>
        <strain>UTEX LB 555 / Pringsheim</strain>
    </source>
</reference>
<accession>P48130</accession>
<protein>
    <recommendedName>
        <fullName evidence="2">Large ribosomal subunit protein bL34c</fullName>
    </recommendedName>
    <alternativeName>
        <fullName>50S ribosomal protein L34, cyanelle</fullName>
    </alternativeName>
</protein>
<comment type="subcellular location">
    <subcellularLocation>
        <location>Plastid</location>
        <location>Cyanelle</location>
    </subcellularLocation>
</comment>
<comment type="similarity">
    <text evidence="2">Belongs to the bacterial ribosomal protein bL34 family.</text>
</comment>
<keyword id="KW-0194">Cyanelle</keyword>
<keyword id="KW-0934">Plastid</keyword>
<keyword id="KW-0687">Ribonucleoprotein</keyword>
<keyword id="KW-0689">Ribosomal protein</keyword>
<dbReference type="EMBL" id="U30821">
    <property type="protein sequence ID" value="AAA81308.1"/>
    <property type="molecule type" value="Genomic_DNA"/>
</dbReference>
<dbReference type="PIR" id="T06965">
    <property type="entry name" value="T06965"/>
</dbReference>
<dbReference type="RefSeq" id="NP_043277.1">
    <property type="nucleotide sequence ID" value="NC_001675.1"/>
</dbReference>
<dbReference type="SMR" id="P48130"/>
<dbReference type="GeneID" id="801621"/>
<dbReference type="GO" id="GO:0009842">
    <property type="term" value="C:cyanelle"/>
    <property type="evidence" value="ECO:0007669"/>
    <property type="project" value="UniProtKB-SubCell"/>
</dbReference>
<dbReference type="GO" id="GO:1990904">
    <property type="term" value="C:ribonucleoprotein complex"/>
    <property type="evidence" value="ECO:0007669"/>
    <property type="project" value="UniProtKB-KW"/>
</dbReference>
<dbReference type="GO" id="GO:0005840">
    <property type="term" value="C:ribosome"/>
    <property type="evidence" value="ECO:0007669"/>
    <property type="project" value="UniProtKB-KW"/>
</dbReference>
<dbReference type="GO" id="GO:0003735">
    <property type="term" value="F:structural constituent of ribosome"/>
    <property type="evidence" value="ECO:0007669"/>
    <property type="project" value="InterPro"/>
</dbReference>
<dbReference type="GO" id="GO:0006412">
    <property type="term" value="P:translation"/>
    <property type="evidence" value="ECO:0007669"/>
    <property type="project" value="InterPro"/>
</dbReference>
<dbReference type="Gene3D" id="1.10.287.3980">
    <property type="match status" value="1"/>
</dbReference>
<dbReference type="HAMAP" id="MF_00391">
    <property type="entry name" value="Ribosomal_bL34"/>
    <property type="match status" value="1"/>
</dbReference>
<dbReference type="InterPro" id="IPR000271">
    <property type="entry name" value="Ribosomal_bL34"/>
</dbReference>
<dbReference type="InterPro" id="IPR020939">
    <property type="entry name" value="Ribosomal_bL34_CS"/>
</dbReference>
<dbReference type="NCBIfam" id="TIGR01030">
    <property type="entry name" value="rpmH_bact"/>
    <property type="match status" value="1"/>
</dbReference>
<dbReference type="Pfam" id="PF00468">
    <property type="entry name" value="Ribosomal_L34"/>
    <property type="match status" value="1"/>
</dbReference>
<dbReference type="PROSITE" id="PS00784">
    <property type="entry name" value="RIBOSOMAL_L34"/>
    <property type="match status" value="1"/>
</dbReference>
<sequence length="46" mass="5430">MSKRTLEGSHRKKVRKSGFLSRSQSPTGRRILKARRKKGRKMLVKY</sequence>
<feature type="chain" id="PRO_0000187513" description="Large ribosomal subunit protein bL34c">
    <location>
        <begin position="1"/>
        <end position="46"/>
    </location>
</feature>
<feature type="region of interest" description="Disordered" evidence="1">
    <location>
        <begin position="1"/>
        <end position="46"/>
    </location>
</feature>
<feature type="compositionally biased region" description="Basic residues" evidence="1">
    <location>
        <begin position="30"/>
        <end position="46"/>
    </location>
</feature>
<geneLocation type="cyanelle"/>
<evidence type="ECO:0000256" key="1">
    <source>
        <dbReference type="SAM" id="MobiDB-lite"/>
    </source>
</evidence>
<evidence type="ECO:0000305" key="2"/>
<organism>
    <name type="scientific">Cyanophora paradoxa</name>
    <dbReference type="NCBI Taxonomy" id="2762"/>
    <lineage>
        <taxon>Eukaryota</taxon>
        <taxon>Glaucocystophyceae</taxon>
        <taxon>Cyanophoraceae</taxon>
        <taxon>Cyanophora</taxon>
    </lineage>
</organism>
<gene>
    <name type="primary">rpl34</name>
</gene>